<dbReference type="EMBL" id="AL392174">
    <property type="status" value="NOT_ANNOTATED_CDS"/>
    <property type="molecule type" value="Genomic_DNA"/>
</dbReference>
<dbReference type="EMBL" id="CP002688">
    <property type="protein sequence ID" value="AED91297.1"/>
    <property type="molecule type" value="Genomic_DNA"/>
</dbReference>
<dbReference type="EMBL" id="AK117319">
    <property type="protein sequence ID" value="BAC41990.1"/>
    <property type="molecule type" value="mRNA"/>
</dbReference>
<dbReference type="EMBL" id="BT003708">
    <property type="protein sequence ID" value="AAO39936.1"/>
    <property type="molecule type" value="mRNA"/>
</dbReference>
<dbReference type="EMBL" id="AY087076">
    <property type="protein sequence ID" value="AAM64637.1"/>
    <property type="molecule type" value="mRNA"/>
</dbReference>
<dbReference type="RefSeq" id="NP_568195.1">
    <property type="nucleotide sequence ID" value="NM_120925.2"/>
</dbReference>
<dbReference type="PDB" id="7C2B">
    <property type="method" value="X-ray"/>
    <property type="resolution" value="1.79 A"/>
    <property type="chains" value="B=73-184"/>
</dbReference>
<dbReference type="PDB" id="7C3F">
    <property type="method" value="X-ray"/>
    <property type="resolution" value="2.40 A"/>
    <property type="chains" value="B/E/H/K/N/Q/T=73-184"/>
</dbReference>
<dbReference type="PDBsum" id="7C2B"/>
<dbReference type="PDBsum" id="7C3F"/>
<dbReference type="SMR" id="Q8LBP6"/>
<dbReference type="FunCoup" id="Q8LBP6">
    <property type="interactions" value="858"/>
</dbReference>
<dbReference type="IntAct" id="Q8LBP6">
    <property type="interactions" value="2"/>
</dbReference>
<dbReference type="GlyGen" id="Q8LBP6">
    <property type="glycosylation" value="1 site"/>
</dbReference>
<dbReference type="PaxDb" id="3702-AT5G08410.1"/>
<dbReference type="ProteomicsDB" id="193266"/>
<dbReference type="EnsemblPlants" id="AT5G08410.1">
    <property type="protein sequence ID" value="AT5G08410.1"/>
    <property type="gene ID" value="AT5G08410"/>
</dbReference>
<dbReference type="GeneID" id="830739"/>
<dbReference type="Gramene" id="AT5G08410.1">
    <property type="protein sequence ID" value="AT5G08410.1"/>
    <property type="gene ID" value="AT5G08410"/>
</dbReference>
<dbReference type="KEGG" id="ath:AT5G08410"/>
<dbReference type="Araport" id="AT5G08410"/>
<dbReference type="TAIR" id="AT5G08410">
    <property type="gene designation" value="FTRA2"/>
</dbReference>
<dbReference type="eggNOG" id="KOG2672">
    <property type="taxonomic scope" value="Eukaryota"/>
</dbReference>
<dbReference type="HOGENOM" id="CLU_115599_1_0_1"/>
<dbReference type="OMA" id="GRSKCAI"/>
<dbReference type="OrthoDB" id="1916328at2759"/>
<dbReference type="PRO" id="PR:Q8LBP6"/>
<dbReference type="Proteomes" id="UP000006548">
    <property type="component" value="Chromosome 5"/>
</dbReference>
<dbReference type="ExpressionAtlas" id="Q8LBP6">
    <property type="expression patterns" value="baseline and differential"/>
</dbReference>
<dbReference type="GO" id="GO:0009507">
    <property type="term" value="C:chloroplast"/>
    <property type="evidence" value="ECO:0007005"/>
    <property type="project" value="TAIR"/>
</dbReference>
<dbReference type="GO" id="GO:0016491">
    <property type="term" value="F:oxidoreductase activity"/>
    <property type="evidence" value="ECO:0007669"/>
    <property type="project" value="UniProtKB-KW"/>
</dbReference>
<dbReference type="GO" id="GO:0015979">
    <property type="term" value="P:photosynthesis"/>
    <property type="evidence" value="ECO:0007669"/>
    <property type="project" value="InterPro"/>
</dbReference>
<dbReference type="FunFam" id="2.30.30.50:FF:000002">
    <property type="entry name" value="Ferredoxin-thioredoxin reductase, variable chain"/>
    <property type="match status" value="1"/>
</dbReference>
<dbReference type="Gene3D" id="2.30.30.50">
    <property type="match status" value="1"/>
</dbReference>
<dbReference type="InterPro" id="IPR008990">
    <property type="entry name" value="Elect_transpt_acc-like_dom_sf"/>
</dbReference>
<dbReference type="InterPro" id="IPR004207">
    <property type="entry name" value="Fd_thioredoxin_Rdtase_alpha"/>
</dbReference>
<dbReference type="InterPro" id="IPR044166">
    <property type="entry name" value="FTRV"/>
</dbReference>
<dbReference type="PANTHER" id="PTHR46937:SF6">
    <property type="entry name" value="FERREDOXIN-THIOREDOXIN REDUCTASE SUBUNIT A2, CHLOROPLASTIC"/>
    <property type="match status" value="1"/>
</dbReference>
<dbReference type="PANTHER" id="PTHR46937">
    <property type="entry name" value="FERREDOXIN-THIOREDOXIN REDUCTASE, VARIABLE CHAIN"/>
    <property type="match status" value="1"/>
</dbReference>
<dbReference type="Pfam" id="PF02941">
    <property type="entry name" value="FeThRed_A"/>
    <property type="match status" value="1"/>
</dbReference>
<dbReference type="SUPFAM" id="SSF50090">
    <property type="entry name" value="Electron transport accessory proteins"/>
    <property type="match status" value="1"/>
</dbReference>
<comment type="function">
    <text evidence="1">Variable subunit of the ferredoxin-thioredoxin reductase (FTR), which catalyzes the two-electron reduction of thioredoxins by the electrons provided by reduced ferredoxin.</text>
</comment>
<comment type="subunit">
    <text evidence="1">Heterodimer of subunit A (variable subunit) and subunit B (catalytic subunit). Heterodimeric FTR forms a complex with ferredoxin and thioredoxin.</text>
</comment>
<comment type="subcellular location">
    <subcellularLocation>
        <location evidence="2">Plastid</location>
        <location evidence="2">Chloroplast</location>
    </subcellularLocation>
</comment>
<comment type="similarity">
    <text evidence="4">Belongs to the ferredoxin thioredoxin reductase alpha subunit family.</text>
</comment>
<accession>Q8LBP6</accession>
<proteinExistence type="evidence at protein level"/>
<protein>
    <recommendedName>
        <fullName>Ferredoxin-thioredoxin reductase subunit A2, chloroplastic</fullName>
        <shortName evidence="3">FTR-A2</shortName>
    </recommendedName>
    <alternativeName>
        <fullName>Ferredoxin-thioredoxin reductase, variable chain FTRA2</fullName>
        <shortName evidence="4">FTR-V 2</shortName>
    </alternativeName>
</protein>
<feature type="transit peptide" description="Chloroplast" evidence="2">
    <location>
        <begin position="1"/>
        <end position="71"/>
    </location>
</feature>
<feature type="chain" id="PRO_0000457112" description="Ferredoxin-thioredoxin reductase subunit A2, chloroplastic">
    <location>
        <begin position="72"/>
        <end position="184"/>
    </location>
</feature>
<feature type="helix" evidence="7">
    <location>
        <begin position="97"/>
        <end position="103"/>
    </location>
</feature>
<feature type="turn" evidence="7">
    <location>
        <begin position="104"/>
        <end position="107"/>
    </location>
</feature>
<feature type="strand" evidence="7">
    <location>
        <begin position="109"/>
        <end position="112"/>
    </location>
</feature>
<feature type="strand" evidence="7">
    <location>
        <begin position="133"/>
        <end position="139"/>
    </location>
</feature>
<feature type="strand" evidence="7">
    <location>
        <begin position="154"/>
        <end position="162"/>
    </location>
</feature>
<feature type="turn" evidence="7">
    <location>
        <begin position="163"/>
        <end position="165"/>
    </location>
</feature>
<feature type="strand" evidence="7">
    <location>
        <begin position="166"/>
        <end position="174"/>
    </location>
</feature>
<feature type="helix" evidence="7">
    <location>
        <begin position="176"/>
        <end position="178"/>
    </location>
</feature>
<feature type="strand" evidence="7">
    <location>
        <begin position="179"/>
        <end position="181"/>
    </location>
</feature>
<reference key="1">
    <citation type="journal article" date="2000" name="Nature">
        <title>Sequence and analysis of chromosome 5 of the plant Arabidopsis thaliana.</title>
        <authorList>
            <person name="Tabata S."/>
            <person name="Kaneko T."/>
            <person name="Nakamura Y."/>
            <person name="Kotani H."/>
            <person name="Kato T."/>
            <person name="Asamizu E."/>
            <person name="Miyajima N."/>
            <person name="Sasamoto S."/>
            <person name="Kimura T."/>
            <person name="Hosouchi T."/>
            <person name="Kawashima K."/>
            <person name="Kohara M."/>
            <person name="Matsumoto M."/>
            <person name="Matsuno A."/>
            <person name="Muraki A."/>
            <person name="Nakayama S."/>
            <person name="Nakazaki N."/>
            <person name="Naruo K."/>
            <person name="Okumura S."/>
            <person name="Shinpo S."/>
            <person name="Takeuchi C."/>
            <person name="Wada T."/>
            <person name="Watanabe A."/>
            <person name="Yamada M."/>
            <person name="Yasuda M."/>
            <person name="Sato S."/>
            <person name="de la Bastide M."/>
            <person name="Huang E."/>
            <person name="Spiegel L."/>
            <person name="Gnoj L."/>
            <person name="O'Shaughnessy A."/>
            <person name="Preston R."/>
            <person name="Habermann K."/>
            <person name="Murray J."/>
            <person name="Johnson D."/>
            <person name="Rohlfing T."/>
            <person name="Nelson J."/>
            <person name="Stoneking T."/>
            <person name="Pepin K."/>
            <person name="Spieth J."/>
            <person name="Sekhon M."/>
            <person name="Armstrong J."/>
            <person name="Becker M."/>
            <person name="Belter E."/>
            <person name="Cordum H."/>
            <person name="Cordes M."/>
            <person name="Courtney L."/>
            <person name="Courtney W."/>
            <person name="Dante M."/>
            <person name="Du H."/>
            <person name="Edwards J."/>
            <person name="Fryman J."/>
            <person name="Haakensen B."/>
            <person name="Lamar E."/>
            <person name="Latreille P."/>
            <person name="Leonard S."/>
            <person name="Meyer R."/>
            <person name="Mulvaney E."/>
            <person name="Ozersky P."/>
            <person name="Riley A."/>
            <person name="Strowmatt C."/>
            <person name="Wagner-McPherson C."/>
            <person name="Wollam A."/>
            <person name="Yoakum M."/>
            <person name="Bell M."/>
            <person name="Dedhia N."/>
            <person name="Parnell L."/>
            <person name="Shah R."/>
            <person name="Rodriguez M."/>
            <person name="Hoon See L."/>
            <person name="Vil D."/>
            <person name="Baker J."/>
            <person name="Kirchoff K."/>
            <person name="Toth K."/>
            <person name="King L."/>
            <person name="Bahret A."/>
            <person name="Miller B."/>
            <person name="Marra M.A."/>
            <person name="Martienssen R."/>
            <person name="McCombie W.R."/>
            <person name="Wilson R.K."/>
            <person name="Murphy G."/>
            <person name="Bancroft I."/>
            <person name="Volckaert G."/>
            <person name="Wambutt R."/>
            <person name="Duesterhoeft A."/>
            <person name="Stiekema W."/>
            <person name="Pohl T."/>
            <person name="Entian K.-D."/>
            <person name="Terryn N."/>
            <person name="Hartley N."/>
            <person name="Bent E."/>
            <person name="Johnson S."/>
            <person name="Langham S.-A."/>
            <person name="McCullagh B."/>
            <person name="Robben J."/>
            <person name="Grymonprez B."/>
            <person name="Zimmermann W."/>
            <person name="Ramsperger U."/>
            <person name="Wedler H."/>
            <person name="Balke K."/>
            <person name="Wedler E."/>
            <person name="Peters S."/>
            <person name="van Staveren M."/>
            <person name="Dirkse W."/>
            <person name="Mooijman P."/>
            <person name="Klein Lankhorst R."/>
            <person name="Weitzenegger T."/>
            <person name="Bothe G."/>
            <person name="Rose M."/>
            <person name="Hauf J."/>
            <person name="Berneiser S."/>
            <person name="Hempel S."/>
            <person name="Feldpausch M."/>
            <person name="Lamberth S."/>
            <person name="Villarroel R."/>
            <person name="Gielen J."/>
            <person name="Ardiles W."/>
            <person name="Bents O."/>
            <person name="Lemcke K."/>
            <person name="Kolesov G."/>
            <person name="Mayer K.F.X."/>
            <person name="Rudd S."/>
            <person name="Schoof H."/>
            <person name="Schueller C."/>
            <person name="Zaccaria P."/>
            <person name="Mewes H.-W."/>
            <person name="Bevan M."/>
            <person name="Fransz P.F."/>
        </authorList>
    </citation>
    <scope>NUCLEOTIDE SEQUENCE [LARGE SCALE GENOMIC DNA]</scope>
    <source>
        <strain>cv. Columbia</strain>
    </source>
</reference>
<reference key="2">
    <citation type="journal article" date="2017" name="Plant J.">
        <title>Araport11: a complete reannotation of the Arabidopsis thaliana reference genome.</title>
        <authorList>
            <person name="Cheng C.Y."/>
            <person name="Krishnakumar V."/>
            <person name="Chan A.P."/>
            <person name="Thibaud-Nissen F."/>
            <person name="Schobel S."/>
            <person name="Town C.D."/>
        </authorList>
    </citation>
    <scope>GENOME REANNOTATION</scope>
    <source>
        <strain>cv. Columbia</strain>
    </source>
</reference>
<reference key="3">
    <citation type="journal article" date="2002" name="Science">
        <title>Functional annotation of a full-length Arabidopsis cDNA collection.</title>
        <authorList>
            <person name="Seki M."/>
            <person name="Narusaka M."/>
            <person name="Kamiya A."/>
            <person name="Ishida J."/>
            <person name="Satou M."/>
            <person name="Sakurai T."/>
            <person name="Nakajima M."/>
            <person name="Enju A."/>
            <person name="Akiyama K."/>
            <person name="Oono Y."/>
            <person name="Muramatsu M."/>
            <person name="Hayashizaki Y."/>
            <person name="Kawai J."/>
            <person name="Carninci P."/>
            <person name="Itoh M."/>
            <person name="Ishii Y."/>
            <person name="Arakawa T."/>
            <person name="Shibata K."/>
            <person name="Shinagawa A."/>
            <person name="Shinozaki K."/>
        </authorList>
    </citation>
    <scope>NUCLEOTIDE SEQUENCE [LARGE SCALE MRNA]</scope>
    <source>
        <strain>cv. Columbia</strain>
    </source>
</reference>
<reference key="4">
    <citation type="journal article" date="2003" name="Science">
        <title>Empirical analysis of transcriptional activity in the Arabidopsis genome.</title>
        <authorList>
            <person name="Yamada K."/>
            <person name="Lim J."/>
            <person name="Dale J.M."/>
            <person name="Chen H."/>
            <person name="Shinn P."/>
            <person name="Palm C.J."/>
            <person name="Southwick A.M."/>
            <person name="Wu H.C."/>
            <person name="Kim C.J."/>
            <person name="Nguyen M."/>
            <person name="Pham P.K."/>
            <person name="Cheuk R.F."/>
            <person name="Karlin-Newmann G."/>
            <person name="Liu S.X."/>
            <person name="Lam B."/>
            <person name="Sakano H."/>
            <person name="Wu T."/>
            <person name="Yu G."/>
            <person name="Miranda M."/>
            <person name="Quach H.L."/>
            <person name="Tripp M."/>
            <person name="Chang C.H."/>
            <person name="Lee J.M."/>
            <person name="Toriumi M.J."/>
            <person name="Chan M.M."/>
            <person name="Tang C.C."/>
            <person name="Onodera C.S."/>
            <person name="Deng J.M."/>
            <person name="Akiyama K."/>
            <person name="Ansari Y."/>
            <person name="Arakawa T."/>
            <person name="Banh J."/>
            <person name="Banno F."/>
            <person name="Bowser L."/>
            <person name="Brooks S.Y."/>
            <person name="Carninci P."/>
            <person name="Chao Q."/>
            <person name="Choy N."/>
            <person name="Enju A."/>
            <person name="Goldsmith A.D."/>
            <person name="Gurjal M."/>
            <person name="Hansen N.F."/>
            <person name="Hayashizaki Y."/>
            <person name="Johnson-Hopson C."/>
            <person name="Hsuan V.W."/>
            <person name="Iida K."/>
            <person name="Karnes M."/>
            <person name="Khan S."/>
            <person name="Koesema E."/>
            <person name="Ishida J."/>
            <person name="Jiang P.X."/>
            <person name="Jones T."/>
            <person name="Kawai J."/>
            <person name="Kamiya A."/>
            <person name="Meyers C."/>
            <person name="Nakajima M."/>
            <person name="Narusaka M."/>
            <person name="Seki M."/>
            <person name="Sakurai T."/>
            <person name="Satou M."/>
            <person name="Tamse R."/>
            <person name="Vaysberg M."/>
            <person name="Wallender E.K."/>
            <person name="Wong C."/>
            <person name="Yamamura Y."/>
            <person name="Yuan S."/>
            <person name="Shinozaki K."/>
            <person name="Davis R.W."/>
            <person name="Theologis A."/>
            <person name="Ecker J.R."/>
        </authorList>
    </citation>
    <scope>NUCLEOTIDE SEQUENCE [LARGE SCALE MRNA]</scope>
    <source>
        <strain>cv. Columbia</strain>
    </source>
</reference>
<reference key="5">
    <citation type="submission" date="2002-03" db="EMBL/GenBank/DDBJ databases">
        <title>Full-length cDNA from Arabidopsis thaliana.</title>
        <authorList>
            <person name="Brover V.V."/>
            <person name="Troukhan M.E."/>
            <person name="Alexandrov N.A."/>
            <person name="Lu Y.-P."/>
            <person name="Flavell R.B."/>
            <person name="Feldmann K.A."/>
        </authorList>
    </citation>
    <scope>NUCLEOTIDE SEQUENCE [LARGE SCALE MRNA]</scope>
</reference>
<reference key="6">
    <citation type="journal article" date="2004" name="Photosyn. Res.">
        <title>Characterization of Arabidopsis mutants for the variable subunit of ferredoxin:thioredoxin reductase.</title>
        <authorList>
            <person name="Keryer E."/>
            <person name="Collin V."/>
            <person name="Lavergne D."/>
            <person name="Lemaire S."/>
            <person name="Issakidis-Bourguet E."/>
        </authorList>
    </citation>
    <scope>GENE FAMILY</scope>
    <scope>NOMENCLATURE</scope>
    <source>
        <strain>cv. Wassilewskija</strain>
    </source>
</reference>
<reference key="7">
    <citation type="journal article" date="2020" name="Protein Sci.">
        <title>Structural basis for thioredoxin isoform-based fine-tuning of ferredoxin-thioredoxin reductase activity.</title>
        <authorList>
            <person name="Juniar L."/>
            <person name="Tanaka H."/>
            <person name="Yoshida K."/>
            <person name="Hisabori T."/>
            <person name="Kurisu G."/>
        </authorList>
    </citation>
    <scope>X-RAY CRYSTALLOGRAPHY (1.79 ANGSTROMS) OF 73-184</scope>
</reference>
<gene>
    <name evidence="3" type="primary">FTRA2</name>
    <name evidence="5" type="ordered locus">At5g08410</name>
    <name evidence="6" type="ORF">F8L15.14</name>
</gene>
<name>FTRA2_ARATH</name>
<organism>
    <name type="scientific">Arabidopsis thaliana</name>
    <name type="common">Mouse-ear cress</name>
    <dbReference type="NCBI Taxonomy" id="3702"/>
    <lineage>
        <taxon>Eukaryota</taxon>
        <taxon>Viridiplantae</taxon>
        <taxon>Streptophyta</taxon>
        <taxon>Embryophyta</taxon>
        <taxon>Tracheophyta</taxon>
        <taxon>Spermatophyta</taxon>
        <taxon>Magnoliopsida</taxon>
        <taxon>eudicotyledons</taxon>
        <taxon>Gunneridae</taxon>
        <taxon>Pentapetalae</taxon>
        <taxon>rosids</taxon>
        <taxon>malvids</taxon>
        <taxon>Brassicales</taxon>
        <taxon>Brassicaceae</taxon>
        <taxon>Camelineae</taxon>
        <taxon>Arabidopsis</taxon>
    </lineage>
</organism>
<keyword id="KW-0002">3D-structure</keyword>
<keyword id="KW-0150">Chloroplast</keyword>
<keyword id="KW-0560">Oxidoreductase</keyword>
<keyword id="KW-0934">Plastid</keyword>
<keyword id="KW-1185">Reference proteome</keyword>
<keyword id="KW-0809">Transit peptide</keyword>
<sequence length="184" mass="20146">MTNSYALSPAIIAAVRPPASQDYLVAASLSGRKSINSSSSSIFVPISLSTSYGRSKCAFSISRKNPKSTIRCDIAVKSAASVDADADLSSSTSLETEEDEKAKEKIGARVRVTVPLKVYHVVRVPEVELMGMEGFIKDYVVLWKGKKISANLPFKVQFVKEIEGRGPVKFFTHLKEDEFELIDP</sequence>
<evidence type="ECO:0000250" key="1">
    <source>
        <dbReference type="UniProtKB" id="P80680"/>
    </source>
</evidence>
<evidence type="ECO:0000255" key="2"/>
<evidence type="ECO:0000303" key="3">
    <source>
    </source>
</evidence>
<evidence type="ECO:0000305" key="4"/>
<evidence type="ECO:0000312" key="5">
    <source>
        <dbReference type="Araport" id="AT5G08410"/>
    </source>
</evidence>
<evidence type="ECO:0000312" key="6">
    <source>
        <dbReference type="EMBL" id="AED91297.1"/>
    </source>
</evidence>
<evidence type="ECO:0007829" key="7">
    <source>
        <dbReference type="PDB" id="7C2B"/>
    </source>
</evidence>